<evidence type="ECO:0000250" key="1"/>
<evidence type="ECO:0000255" key="2"/>
<evidence type="ECO:0000305" key="3"/>
<dbReference type="EMBL" id="CU329671">
    <property type="protein sequence ID" value="CAA17799.1"/>
    <property type="molecule type" value="Genomic_DNA"/>
</dbReference>
<dbReference type="PIR" id="T40358">
    <property type="entry name" value="T40358"/>
</dbReference>
<dbReference type="RefSeq" id="NP_596677.1">
    <property type="nucleotide sequence ID" value="NM_001022599.2"/>
</dbReference>
<dbReference type="SMR" id="O43047"/>
<dbReference type="BioGRID" id="277554">
    <property type="interactions" value="6"/>
</dbReference>
<dbReference type="FunCoup" id="O43047">
    <property type="interactions" value="205"/>
</dbReference>
<dbReference type="STRING" id="284812.O43047"/>
<dbReference type="iPTMnet" id="O43047"/>
<dbReference type="PaxDb" id="4896-SPBC3B9.19.1"/>
<dbReference type="EnsemblFungi" id="SPBC3B9.19.1">
    <property type="protein sequence ID" value="SPBC3B9.19.1:pep"/>
    <property type="gene ID" value="SPBC3B9.19"/>
</dbReference>
<dbReference type="GeneID" id="2541039"/>
<dbReference type="KEGG" id="spo:2541039"/>
<dbReference type="PomBase" id="SPBC3B9.19">
    <property type="gene designation" value="mge1"/>
</dbReference>
<dbReference type="VEuPathDB" id="FungiDB:SPBC3B9.19"/>
<dbReference type="eggNOG" id="KOG3003">
    <property type="taxonomic scope" value="Eukaryota"/>
</dbReference>
<dbReference type="HOGENOM" id="CLU_057217_0_0_1"/>
<dbReference type="InParanoid" id="O43047"/>
<dbReference type="OMA" id="PHRHQAI"/>
<dbReference type="PhylomeDB" id="O43047"/>
<dbReference type="PRO" id="PR:O43047"/>
<dbReference type="Proteomes" id="UP000002485">
    <property type="component" value="Chromosome II"/>
</dbReference>
<dbReference type="GO" id="GO:0001405">
    <property type="term" value="C:PAM complex, Tim23 associated import motor"/>
    <property type="evidence" value="ECO:0000318"/>
    <property type="project" value="GO_Central"/>
</dbReference>
<dbReference type="GO" id="GO:0000774">
    <property type="term" value="F:adenyl-nucleotide exchange factor activity"/>
    <property type="evidence" value="ECO:0000318"/>
    <property type="project" value="GO_Central"/>
</dbReference>
<dbReference type="GO" id="GO:0042803">
    <property type="term" value="F:protein homodimerization activity"/>
    <property type="evidence" value="ECO:0007669"/>
    <property type="project" value="InterPro"/>
</dbReference>
<dbReference type="GO" id="GO:0051087">
    <property type="term" value="F:protein-folding chaperone binding"/>
    <property type="evidence" value="ECO:0007669"/>
    <property type="project" value="InterPro"/>
</dbReference>
<dbReference type="GO" id="GO:0051082">
    <property type="term" value="F:unfolded protein binding"/>
    <property type="evidence" value="ECO:0000318"/>
    <property type="project" value="GO_Central"/>
</dbReference>
<dbReference type="GO" id="GO:0044571">
    <property type="term" value="P:[2Fe-2S] cluster assembly"/>
    <property type="evidence" value="ECO:0000266"/>
    <property type="project" value="PomBase"/>
</dbReference>
<dbReference type="GO" id="GO:0006457">
    <property type="term" value="P:protein folding"/>
    <property type="evidence" value="ECO:0000266"/>
    <property type="project" value="PomBase"/>
</dbReference>
<dbReference type="GO" id="GO:0030150">
    <property type="term" value="P:protein import into mitochondrial matrix"/>
    <property type="evidence" value="ECO:0000266"/>
    <property type="project" value="PomBase"/>
</dbReference>
<dbReference type="CDD" id="cd00446">
    <property type="entry name" value="GrpE"/>
    <property type="match status" value="1"/>
</dbReference>
<dbReference type="FunFam" id="2.30.22.10:FF:000002">
    <property type="entry name" value="GrpE protein homolog"/>
    <property type="match status" value="1"/>
</dbReference>
<dbReference type="FunFam" id="3.90.20.20:FF:000011">
    <property type="entry name" value="GrpE protein homolog"/>
    <property type="match status" value="1"/>
</dbReference>
<dbReference type="Gene3D" id="3.90.20.20">
    <property type="match status" value="1"/>
</dbReference>
<dbReference type="Gene3D" id="2.30.22.10">
    <property type="entry name" value="Head domain of nucleotide exchange factor GrpE"/>
    <property type="match status" value="1"/>
</dbReference>
<dbReference type="HAMAP" id="MF_01151">
    <property type="entry name" value="GrpE"/>
    <property type="match status" value="1"/>
</dbReference>
<dbReference type="InterPro" id="IPR000740">
    <property type="entry name" value="GrpE"/>
</dbReference>
<dbReference type="InterPro" id="IPR013805">
    <property type="entry name" value="GrpE_coiled_coil"/>
</dbReference>
<dbReference type="InterPro" id="IPR009012">
    <property type="entry name" value="GrpE_head"/>
</dbReference>
<dbReference type="PANTHER" id="PTHR21237">
    <property type="entry name" value="GRPE PROTEIN"/>
    <property type="match status" value="1"/>
</dbReference>
<dbReference type="PANTHER" id="PTHR21237:SF23">
    <property type="entry name" value="GRPE PROTEIN HOMOLOG, MITOCHONDRIAL"/>
    <property type="match status" value="1"/>
</dbReference>
<dbReference type="Pfam" id="PF01025">
    <property type="entry name" value="GrpE"/>
    <property type="match status" value="1"/>
</dbReference>
<dbReference type="PRINTS" id="PR00773">
    <property type="entry name" value="GRPEPROTEIN"/>
</dbReference>
<dbReference type="SUPFAM" id="SSF58014">
    <property type="entry name" value="Coiled-coil domain of nucleotide exchange factor GrpE"/>
    <property type="match status" value="1"/>
</dbReference>
<dbReference type="SUPFAM" id="SSF51064">
    <property type="entry name" value="Head domain of nucleotide exchange factor GrpE"/>
    <property type="match status" value="1"/>
</dbReference>
<dbReference type="PROSITE" id="PS01071">
    <property type="entry name" value="GRPE"/>
    <property type="match status" value="1"/>
</dbReference>
<gene>
    <name type="primary">mge1</name>
    <name type="ORF">SPBC3B9.19</name>
</gene>
<name>GRPE_SCHPO</name>
<protein>
    <recommendedName>
        <fullName>GrpE protein homolog, mitochondrial</fullName>
    </recommendedName>
</protein>
<proteinExistence type="inferred from homology"/>
<sequence>MLGLGRVFSSAVRPRTLIRAPINKRSFLWYSTEAAKEEKPAEEKVAETENVDVKELQSKLSELKSKYEAKDKEVAELKGSIRQSLADYRNLENRMKRDMEQTRAFAVQKLTKDLLDSVDNLERALSIVPEEKRNNRESNKDLVDLYEGLAMTESNLMKTLGKYGLVRYDGIGEDFDPNIHEAVFQIPVEGKKPNTVFHCESKGFQLNGRVIRPAKVGVVKGDD</sequence>
<keyword id="KW-0143">Chaperone</keyword>
<keyword id="KW-0496">Mitochondrion</keyword>
<keyword id="KW-1185">Reference proteome</keyword>
<keyword id="KW-0809">Transit peptide</keyword>
<organism>
    <name type="scientific">Schizosaccharomyces pombe (strain 972 / ATCC 24843)</name>
    <name type="common">Fission yeast</name>
    <dbReference type="NCBI Taxonomy" id="284812"/>
    <lineage>
        <taxon>Eukaryota</taxon>
        <taxon>Fungi</taxon>
        <taxon>Dikarya</taxon>
        <taxon>Ascomycota</taxon>
        <taxon>Taphrinomycotina</taxon>
        <taxon>Schizosaccharomycetes</taxon>
        <taxon>Schizosaccharomycetales</taxon>
        <taxon>Schizosaccharomycetaceae</taxon>
        <taxon>Schizosaccharomyces</taxon>
    </lineage>
</organism>
<reference key="1">
    <citation type="journal article" date="2002" name="Nature">
        <title>The genome sequence of Schizosaccharomyces pombe.</title>
        <authorList>
            <person name="Wood V."/>
            <person name="Gwilliam R."/>
            <person name="Rajandream M.A."/>
            <person name="Lyne M.H."/>
            <person name="Lyne R."/>
            <person name="Stewart A."/>
            <person name="Sgouros J.G."/>
            <person name="Peat N."/>
            <person name="Hayles J."/>
            <person name="Baker S.G."/>
            <person name="Basham D."/>
            <person name="Bowman S."/>
            <person name="Brooks K."/>
            <person name="Brown D."/>
            <person name="Brown S."/>
            <person name="Chillingworth T."/>
            <person name="Churcher C.M."/>
            <person name="Collins M."/>
            <person name="Connor R."/>
            <person name="Cronin A."/>
            <person name="Davis P."/>
            <person name="Feltwell T."/>
            <person name="Fraser A."/>
            <person name="Gentles S."/>
            <person name="Goble A."/>
            <person name="Hamlin N."/>
            <person name="Harris D.E."/>
            <person name="Hidalgo J."/>
            <person name="Hodgson G."/>
            <person name="Holroyd S."/>
            <person name="Hornsby T."/>
            <person name="Howarth S."/>
            <person name="Huckle E.J."/>
            <person name="Hunt S."/>
            <person name="Jagels K."/>
            <person name="James K.D."/>
            <person name="Jones L."/>
            <person name="Jones M."/>
            <person name="Leather S."/>
            <person name="McDonald S."/>
            <person name="McLean J."/>
            <person name="Mooney P."/>
            <person name="Moule S."/>
            <person name="Mungall K.L."/>
            <person name="Murphy L.D."/>
            <person name="Niblett D."/>
            <person name="Odell C."/>
            <person name="Oliver K."/>
            <person name="O'Neil S."/>
            <person name="Pearson D."/>
            <person name="Quail M.A."/>
            <person name="Rabbinowitsch E."/>
            <person name="Rutherford K.M."/>
            <person name="Rutter S."/>
            <person name="Saunders D."/>
            <person name="Seeger K."/>
            <person name="Sharp S."/>
            <person name="Skelton J."/>
            <person name="Simmonds M.N."/>
            <person name="Squares R."/>
            <person name="Squares S."/>
            <person name="Stevens K."/>
            <person name="Taylor K."/>
            <person name="Taylor R.G."/>
            <person name="Tivey A."/>
            <person name="Walsh S.V."/>
            <person name="Warren T."/>
            <person name="Whitehead S."/>
            <person name="Woodward J.R."/>
            <person name="Volckaert G."/>
            <person name="Aert R."/>
            <person name="Robben J."/>
            <person name="Grymonprez B."/>
            <person name="Weltjens I."/>
            <person name="Vanstreels E."/>
            <person name="Rieger M."/>
            <person name="Schaefer M."/>
            <person name="Mueller-Auer S."/>
            <person name="Gabel C."/>
            <person name="Fuchs M."/>
            <person name="Duesterhoeft A."/>
            <person name="Fritzc C."/>
            <person name="Holzer E."/>
            <person name="Moestl D."/>
            <person name="Hilbert H."/>
            <person name="Borzym K."/>
            <person name="Langer I."/>
            <person name="Beck A."/>
            <person name="Lehrach H."/>
            <person name="Reinhardt R."/>
            <person name="Pohl T.M."/>
            <person name="Eger P."/>
            <person name="Zimmermann W."/>
            <person name="Wedler H."/>
            <person name="Wambutt R."/>
            <person name="Purnelle B."/>
            <person name="Goffeau A."/>
            <person name="Cadieu E."/>
            <person name="Dreano S."/>
            <person name="Gloux S."/>
            <person name="Lelaure V."/>
            <person name="Mottier S."/>
            <person name="Galibert F."/>
            <person name="Aves S.J."/>
            <person name="Xiang Z."/>
            <person name="Hunt C."/>
            <person name="Moore K."/>
            <person name="Hurst S.M."/>
            <person name="Lucas M."/>
            <person name="Rochet M."/>
            <person name="Gaillardin C."/>
            <person name="Tallada V.A."/>
            <person name="Garzon A."/>
            <person name="Thode G."/>
            <person name="Daga R.R."/>
            <person name="Cruzado L."/>
            <person name="Jimenez J."/>
            <person name="Sanchez M."/>
            <person name="del Rey F."/>
            <person name="Benito J."/>
            <person name="Dominguez A."/>
            <person name="Revuelta J.L."/>
            <person name="Moreno S."/>
            <person name="Armstrong J."/>
            <person name="Forsburg S.L."/>
            <person name="Cerutti L."/>
            <person name="Lowe T."/>
            <person name="McCombie W.R."/>
            <person name="Paulsen I."/>
            <person name="Potashkin J."/>
            <person name="Shpakovski G.V."/>
            <person name="Ussery D."/>
            <person name="Barrell B.G."/>
            <person name="Nurse P."/>
        </authorList>
    </citation>
    <scope>NUCLEOTIDE SEQUENCE [LARGE SCALE GENOMIC DNA]</scope>
    <source>
        <strain>972 / ATCC 24843</strain>
    </source>
</reference>
<comment type="function">
    <text evidence="1">Essential component of the PAM complex, a complex required for the translocation of transit peptide-containing proteins from the inner membrane into the mitochondrial matrix in an ATP-dependent manner. Seems to control the nucleotide-dependent binding of ssc1 to substrate proteins (By similarity).</text>
</comment>
<comment type="subunit">
    <text evidence="1">Component of the PAM complex, at least composed of mtHsp70, mge1, tim44, pam16, pam17 and pam18.</text>
</comment>
<comment type="subcellular location">
    <subcellularLocation>
        <location evidence="1">Mitochondrion matrix</location>
    </subcellularLocation>
</comment>
<comment type="similarity">
    <text evidence="3">Belongs to the GrpE family.</text>
</comment>
<feature type="transit peptide" description="Mitochondrion" evidence="2">
    <location>
        <begin position="1"/>
        <end status="unknown"/>
    </location>
</feature>
<feature type="chain" id="PRO_0000013045" description="GrpE protein homolog, mitochondrial">
    <location>
        <begin status="unknown"/>
        <end position="223"/>
    </location>
</feature>
<accession>O43047</accession>